<protein>
    <recommendedName>
        <fullName evidence="1">NAD kinase</fullName>
        <ecNumber evidence="1">2.7.1.23</ecNumber>
    </recommendedName>
    <alternativeName>
        <fullName evidence="1">ATP-dependent NAD kinase</fullName>
    </alternativeName>
</protein>
<organism>
    <name type="scientific">Salmonella typhi</name>
    <dbReference type="NCBI Taxonomy" id="90370"/>
    <lineage>
        <taxon>Bacteria</taxon>
        <taxon>Pseudomonadati</taxon>
        <taxon>Pseudomonadota</taxon>
        <taxon>Gammaproteobacteria</taxon>
        <taxon>Enterobacterales</taxon>
        <taxon>Enterobacteriaceae</taxon>
        <taxon>Salmonella</taxon>
    </lineage>
</organism>
<sequence>MNNHFKCIGIVGHPRHPTALTTHEMLYRWLCDQGYEVIVEQQIAHELQLKNVPTGTLAEIGQQADLAVVVGGDGNMLGAARTLARYDINVIGINRGNLGFLTDLDPDNALQQLSDVLEGRYISEKRFLLEAQVCQQDRQKRISTAINEVVLHPGKVAHMIEFEVYIDETFAFSQRSDGLIISTPTGSTAYSLSAGGPILTPSLDAITLVPMFPHTLSARPLVINSSSTIRLRFSHRRSDLEISCDSQIALPIQEGEDVLIRRCDYHLNLIHPKDYSYFNTLSTKLGWSKKLF</sequence>
<comment type="function">
    <text evidence="1">Involved in the regulation of the intracellular balance of NAD and NADP, and is a key enzyme in the biosynthesis of NADP. Catalyzes specifically the phosphorylation on 2'-hydroxyl of the adenosine moiety of NAD to yield NADP.</text>
</comment>
<comment type="catalytic activity">
    <reaction evidence="1">
        <text>NAD(+) + ATP = ADP + NADP(+) + H(+)</text>
        <dbReference type="Rhea" id="RHEA:18629"/>
        <dbReference type="ChEBI" id="CHEBI:15378"/>
        <dbReference type="ChEBI" id="CHEBI:30616"/>
        <dbReference type="ChEBI" id="CHEBI:57540"/>
        <dbReference type="ChEBI" id="CHEBI:58349"/>
        <dbReference type="ChEBI" id="CHEBI:456216"/>
        <dbReference type="EC" id="2.7.1.23"/>
    </reaction>
</comment>
<comment type="cofactor">
    <cofactor evidence="1">
        <name>a divalent metal cation</name>
        <dbReference type="ChEBI" id="CHEBI:60240"/>
    </cofactor>
</comment>
<comment type="subcellular location">
    <subcellularLocation>
        <location evidence="1">Cytoplasm</location>
    </subcellularLocation>
</comment>
<comment type="similarity">
    <text evidence="1">Belongs to the NAD kinase family.</text>
</comment>
<dbReference type="EC" id="2.7.1.23" evidence="1"/>
<dbReference type="EMBL" id="AL513382">
    <property type="protein sequence ID" value="CAD05861.1"/>
    <property type="molecule type" value="Genomic_DNA"/>
</dbReference>
<dbReference type="EMBL" id="AE014613">
    <property type="protein sequence ID" value="AAO70208.1"/>
    <property type="molecule type" value="Genomic_DNA"/>
</dbReference>
<dbReference type="RefSeq" id="NP_457152.1">
    <property type="nucleotide sequence ID" value="NC_003198.1"/>
</dbReference>
<dbReference type="RefSeq" id="WP_001059155.1">
    <property type="nucleotide sequence ID" value="NZ_WSUR01000036.1"/>
</dbReference>
<dbReference type="SMR" id="P65775"/>
<dbReference type="STRING" id="220341.gene:17586765"/>
<dbReference type="KEGG" id="stt:t2637"/>
<dbReference type="KEGG" id="sty:STY2869"/>
<dbReference type="PATRIC" id="fig|220341.7.peg.2920"/>
<dbReference type="eggNOG" id="COG0061">
    <property type="taxonomic scope" value="Bacteria"/>
</dbReference>
<dbReference type="HOGENOM" id="CLU_008831_0_1_6"/>
<dbReference type="OMA" id="SMCHFEI"/>
<dbReference type="OrthoDB" id="9774737at2"/>
<dbReference type="Proteomes" id="UP000000541">
    <property type="component" value="Chromosome"/>
</dbReference>
<dbReference type="Proteomes" id="UP000002670">
    <property type="component" value="Chromosome"/>
</dbReference>
<dbReference type="GO" id="GO:0005737">
    <property type="term" value="C:cytoplasm"/>
    <property type="evidence" value="ECO:0007669"/>
    <property type="project" value="UniProtKB-SubCell"/>
</dbReference>
<dbReference type="GO" id="GO:0005524">
    <property type="term" value="F:ATP binding"/>
    <property type="evidence" value="ECO:0007669"/>
    <property type="project" value="UniProtKB-KW"/>
</dbReference>
<dbReference type="GO" id="GO:0046872">
    <property type="term" value="F:metal ion binding"/>
    <property type="evidence" value="ECO:0007669"/>
    <property type="project" value="UniProtKB-UniRule"/>
</dbReference>
<dbReference type="GO" id="GO:0051287">
    <property type="term" value="F:NAD binding"/>
    <property type="evidence" value="ECO:0007669"/>
    <property type="project" value="UniProtKB-ARBA"/>
</dbReference>
<dbReference type="GO" id="GO:0003951">
    <property type="term" value="F:NAD+ kinase activity"/>
    <property type="evidence" value="ECO:0007669"/>
    <property type="project" value="UniProtKB-UniRule"/>
</dbReference>
<dbReference type="GO" id="GO:0019674">
    <property type="term" value="P:NAD metabolic process"/>
    <property type="evidence" value="ECO:0007669"/>
    <property type="project" value="InterPro"/>
</dbReference>
<dbReference type="GO" id="GO:0006741">
    <property type="term" value="P:NADP biosynthetic process"/>
    <property type="evidence" value="ECO:0007669"/>
    <property type="project" value="UniProtKB-UniRule"/>
</dbReference>
<dbReference type="FunFam" id="2.60.200.30:FF:000001">
    <property type="entry name" value="NAD kinase"/>
    <property type="match status" value="1"/>
</dbReference>
<dbReference type="FunFam" id="3.40.50.10330:FF:000004">
    <property type="entry name" value="NAD kinase"/>
    <property type="match status" value="1"/>
</dbReference>
<dbReference type="Gene3D" id="3.40.50.10330">
    <property type="entry name" value="Probable inorganic polyphosphate/atp-NAD kinase, domain 1"/>
    <property type="match status" value="1"/>
</dbReference>
<dbReference type="Gene3D" id="2.60.200.30">
    <property type="entry name" value="Probable inorganic polyphosphate/atp-NAD kinase, domain 2"/>
    <property type="match status" value="1"/>
</dbReference>
<dbReference type="HAMAP" id="MF_00361">
    <property type="entry name" value="NAD_kinase"/>
    <property type="match status" value="1"/>
</dbReference>
<dbReference type="InterPro" id="IPR017438">
    <property type="entry name" value="ATP-NAD_kinase_N"/>
</dbReference>
<dbReference type="InterPro" id="IPR017437">
    <property type="entry name" value="ATP-NAD_kinase_PpnK-typ_C"/>
</dbReference>
<dbReference type="InterPro" id="IPR016064">
    <property type="entry name" value="NAD/diacylglycerol_kinase_sf"/>
</dbReference>
<dbReference type="InterPro" id="IPR002504">
    <property type="entry name" value="NADK"/>
</dbReference>
<dbReference type="NCBIfam" id="NF002306">
    <property type="entry name" value="PRK01231.1"/>
    <property type="match status" value="1"/>
</dbReference>
<dbReference type="NCBIfam" id="NF002893">
    <property type="entry name" value="PRK03378.1"/>
    <property type="match status" value="1"/>
</dbReference>
<dbReference type="PANTHER" id="PTHR20275">
    <property type="entry name" value="NAD KINASE"/>
    <property type="match status" value="1"/>
</dbReference>
<dbReference type="PANTHER" id="PTHR20275:SF0">
    <property type="entry name" value="NAD KINASE"/>
    <property type="match status" value="1"/>
</dbReference>
<dbReference type="Pfam" id="PF01513">
    <property type="entry name" value="NAD_kinase"/>
    <property type="match status" value="1"/>
</dbReference>
<dbReference type="Pfam" id="PF20143">
    <property type="entry name" value="NAD_kinase_C"/>
    <property type="match status" value="1"/>
</dbReference>
<dbReference type="SUPFAM" id="SSF111331">
    <property type="entry name" value="NAD kinase/diacylglycerol kinase-like"/>
    <property type="match status" value="1"/>
</dbReference>
<accession>P65775</accession>
<accession>Q8XFN1</accession>
<reference key="1">
    <citation type="journal article" date="2001" name="Nature">
        <title>Complete genome sequence of a multiple drug resistant Salmonella enterica serovar Typhi CT18.</title>
        <authorList>
            <person name="Parkhill J."/>
            <person name="Dougan G."/>
            <person name="James K.D."/>
            <person name="Thomson N.R."/>
            <person name="Pickard D."/>
            <person name="Wain J."/>
            <person name="Churcher C.M."/>
            <person name="Mungall K.L."/>
            <person name="Bentley S.D."/>
            <person name="Holden M.T.G."/>
            <person name="Sebaihia M."/>
            <person name="Baker S."/>
            <person name="Basham D."/>
            <person name="Brooks K."/>
            <person name="Chillingworth T."/>
            <person name="Connerton P."/>
            <person name="Cronin A."/>
            <person name="Davis P."/>
            <person name="Davies R.M."/>
            <person name="Dowd L."/>
            <person name="White N."/>
            <person name="Farrar J."/>
            <person name="Feltwell T."/>
            <person name="Hamlin N."/>
            <person name="Haque A."/>
            <person name="Hien T.T."/>
            <person name="Holroyd S."/>
            <person name="Jagels K."/>
            <person name="Krogh A."/>
            <person name="Larsen T.S."/>
            <person name="Leather S."/>
            <person name="Moule S."/>
            <person name="O'Gaora P."/>
            <person name="Parry C."/>
            <person name="Quail M.A."/>
            <person name="Rutherford K.M."/>
            <person name="Simmonds M."/>
            <person name="Skelton J."/>
            <person name="Stevens K."/>
            <person name="Whitehead S."/>
            <person name="Barrell B.G."/>
        </authorList>
    </citation>
    <scope>NUCLEOTIDE SEQUENCE [LARGE SCALE GENOMIC DNA]</scope>
    <source>
        <strain>CT18</strain>
    </source>
</reference>
<reference key="2">
    <citation type="journal article" date="2003" name="J. Bacteriol.">
        <title>Comparative genomics of Salmonella enterica serovar Typhi strains Ty2 and CT18.</title>
        <authorList>
            <person name="Deng W."/>
            <person name="Liou S.-R."/>
            <person name="Plunkett G. III"/>
            <person name="Mayhew G.F."/>
            <person name="Rose D.J."/>
            <person name="Burland V."/>
            <person name="Kodoyianni V."/>
            <person name="Schwartz D.C."/>
            <person name="Blattner F.R."/>
        </authorList>
    </citation>
    <scope>NUCLEOTIDE SEQUENCE [LARGE SCALE GENOMIC DNA]</scope>
    <source>
        <strain>ATCC 700931 / Ty2</strain>
    </source>
</reference>
<keyword id="KW-0067">ATP-binding</keyword>
<keyword id="KW-0963">Cytoplasm</keyword>
<keyword id="KW-0418">Kinase</keyword>
<keyword id="KW-0520">NAD</keyword>
<keyword id="KW-0521">NADP</keyword>
<keyword id="KW-0547">Nucleotide-binding</keyword>
<keyword id="KW-0808">Transferase</keyword>
<evidence type="ECO:0000255" key="1">
    <source>
        <dbReference type="HAMAP-Rule" id="MF_00361"/>
    </source>
</evidence>
<feature type="chain" id="PRO_0000120654" description="NAD kinase">
    <location>
        <begin position="1"/>
        <end position="292"/>
    </location>
</feature>
<feature type="active site" description="Proton acceptor" evidence="1">
    <location>
        <position position="73"/>
    </location>
</feature>
<feature type="binding site" evidence="1">
    <location>
        <begin position="73"/>
        <end position="74"/>
    </location>
    <ligand>
        <name>NAD(+)</name>
        <dbReference type="ChEBI" id="CHEBI:57540"/>
    </ligand>
</feature>
<feature type="binding site" evidence="1">
    <location>
        <begin position="147"/>
        <end position="148"/>
    </location>
    <ligand>
        <name>NAD(+)</name>
        <dbReference type="ChEBI" id="CHEBI:57540"/>
    </ligand>
</feature>
<feature type="binding site" evidence="1">
    <location>
        <position position="158"/>
    </location>
    <ligand>
        <name>NAD(+)</name>
        <dbReference type="ChEBI" id="CHEBI:57540"/>
    </ligand>
</feature>
<feature type="binding site" evidence="1">
    <location>
        <position position="175"/>
    </location>
    <ligand>
        <name>NAD(+)</name>
        <dbReference type="ChEBI" id="CHEBI:57540"/>
    </ligand>
</feature>
<feature type="binding site" evidence="1">
    <location>
        <position position="177"/>
    </location>
    <ligand>
        <name>NAD(+)</name>
        <dbReference type="ChEBI" id="CHEBI:57540"/>
    </ligand>
</feature>
<feature type="binding site" evidence="1">
    <location>
        <begin position="188"/>
        <end position="193"/>
    </location>
    <ligand>
        <name>NAD(+)</name>
        <dbReference type="ChEBI" id="CHEBI:57540"/>
    </ligand>
</feature>
<feature type="binding site" evidence="1">
    <location>
        <position position="247"/>
    </location>
    <ligand>
        <name>NAD(+)</name>
        <dbReference type="ChEBI" id="CHEBI:57540"/>
    </ligand>
</feature>
<gene>
    <name evidence="1" type="primary">nadK</name>
    <name type="ordered locus">STY2869</name>
    <name type="ordered locus">t2637</name>
</gene>
<name>NADK_SALTI</name>
<proteinExistence type="inferred from homology"/>